<protein>
    <recommendedName>
        <fullName evidence="1">ATP synthase subunit a 1</fullName>
    </recommendedName>
    <alternativeName>
        <fullName evidence="1">ATP synthase F0 sector subunit a 1</fullName>
    </alternativeName>
    <alternativeName>
        <fullName evidence="1">F-ATPase subunit 6 1</fullName>
    </alternativeName>
</protein>
<feature type="chain" id="PRO_0000362359" description="ATP synthase subunit a 1">
    <location>
        <begin position="1"/>
        <end position="249"/>
    </location>
</feature>
<feature type="transmembrane region" description="Helical" evidence="1">
    <location>
        <begin position="26"/>
        <end position="46"/>
    </location>
</feature>
<feature type="transmembrane region" description="Helical" evidence="1">
    <location>
        <begin position="84"/>
        <end position="104"/>
    </location>
</feature>
<feature type="transmembrane region" description="Helical" evidence="1">
    <location>
        <begin position="114"/>
        <end position="134"/>
    </location>
</feature>
<feature type="transmembrane region" description="Helical" evidence="1">
    <location>
        <begin position="143"/>
        <end position="163"/>
    </location>
</feature>
<feature type="transmembrane region" description="Helical" evidence="1">
    <location>
        <begin position="193"/>
        <end position="213"/>
    </location>
</feature>
<feature type="transmembrane region" description="Helical" evidence="1">
    <location>
        <begin position="216"/>
        <end position="236"/>
    </location>
</feature>
<comment type="function">
    <text evidence="1">Key component of the proton channel; it plays a direct role in the translocation of protons across the membrane.</text>
</comment>
<comment type="subunit">
    <text evidence="1">F-type ATPases have 2 components, CF(1) - the catalytic core - and CF(0) - the membrane proton channel. CF(1) has five subunits: alpha(3), beta(3), gamma(1), delta(1), epsilon(1). CF(0) has three main subunits: a(1), b(2) and c(9-12). The alpha and beta chains form an alternating ring which encloses part of the gamma chain. CF(1) is attached to CF(0) by a central stalk formed by the gamma and epsilon chains, while a peripheral stalk is formed by the delta and b chains.</text>
</comment>
<comment type="subcellular location">
    <subcellularLocation>
        <location evidence="1">Cell inner membrane</location>
        <topology evidence="1">Multi-pass membrane protein</topology>
    </subcellularLocation>
</comment>
<comment type="similarity">
    <text evidence="1">Belongs to the ATPase A chain family.</text>
</comment>
<dbReference type="EMBL" id="CP000758">
    <property type="protein sequence ID" value="ABS13231.1"/>
    <property type="molecule type" value="Genomic_DNA"/>
</dbReference>
<dbReference type="RefSeq" id="WP_010658321.1">
    <property type="nucleotide sequence ID" value="NC_009667.1"/>
</dbReference>
<dbReference type="SMR" id="A6WW77"/>
<dbReference type="STRING" id="439375.Oant_0500"/>
<dbReference type="KEGG" id="oan:Oant_0500"/>
<dbReference type="PATRIC" id="fig|439375.7.peg.534"/>
<dbReference type="eggNOG" id="COG0356">
    <property type="taxonomic scope" value="Bacteria"/>
</dbReference>
<dbReference type="HOGENOM" id="CLU_041018_0_2_5"/>
<dbReference type="PhylomeDB" id="A6WW77"/>
<dbReference type="Proteomes" id="UP000002301">
    <property type="component" value="Chromosome 1"/>
</dbReference>
<dbReference type="GO" id="GO:0005886">
    <property type="term" value="C:plasma membrane"/>
    <property type="evidence" value="ECO:0007669"/>
    <property type="project" value="UniProtKB-SubCell"/>
</dbReference>
<dbReference type="GO" id="GO:0045259">
    <property type="term" value="C:proton-transporting ATP synthase complex"/>
    <property type="evidence" value="ECO:0007669"/>
    <property type="project" value="UniProtKB-KW"/>
</dbReference>
<dbReference type="GO" id="GO:0046933">
    <property type="term" value="F:proton-transporting ATP synthase activity, rotational mechanism"/>
    <property type="evidence" value="ECO:0007669"/>
    <property type="project" value="UniProtKB-UniRule"/>
</dbReference>
<dbReference type="CDD" id="cd00310">
    <property type="entry name" value="ATP-synt_Fo_a_6"/>
    <property type="match status" value="1"/>
</dbReference>
<dbReference type="FunFam" id="1.20.120.220:FF:000003">
    <property type="entry name" value="ATP synthase subunit a"/>
    <property type="match status" value="1"/>
</dbReference>
<dbReference type="Gene3D" id="1.20.120.220">
    <property type="entry name" value="ATP synthase, F0 complex, subunit A"/>
    <property type="match status" value="1"/>
</dbReference>
<dbReference type="HAMAP" id="MF_01393">
    <property type="entry name" value="ATP_synth_a_bact"/>
    <property type="match status" value="1"/>
</dbReference>
<dbReference type="InterPro" id="IPR000568">
    <property type="entry name" value="ATP_synth_F0_asu"/>
</dbReference>
<dbReference type="InterPro" id="IPR023011">
    <property type="entry name" value="ATP_synth_F0_asu_AS"/>
</dbReference>
<dbReference type="InterPro" id="IPR045083">
    <property type="entry name" value="ATP_synth_F0_asu_bact/mt"/>
</dbReference>
<dbReference type="InterPro" id="IPR035908">
    <property type="entry name" value="F0_ATP_A_sf"/>
</dbReference>
<dbReference type="NCBIfam" id="TIGR01131">
    <property type="entry name" value="ATP_synt_6_or_A"/>
    <property type="match status" value="1"/>
</dbReference>
<dbReference type="NCBIfam" id="NF004482">
    <property type="entry name" value="PRK05815.2-4"/>
    <property type="match status" value="1"/>
</dbReference>
<dbReference type="PANTHER" id="PTHR11410">
    <property type="entry name" value="ATP SYNTHASE SUBUNIT A"/>
    <property type="match status" value="1"/>
</dbReference>
<dbReference type="PANTHER" id="PTHR11410:SF0">
    <property type="entry name" value="ATP SYNTHASE SUBUNIT A"/>
    <property type="match status" value="1"/>
</dbReference>
<dbReference type="Pfam" id="PF00119">
    <property type="entry name" value="ATP-synt_A"/>
    <property type="match status" value="1"/>
</dbReference>
<dbReference type="PRINTS" id="PR00123">
    <property type="entry name" value="ATPASEA"/>
</dbReference>
<dbReference type="SUPFAM" id="SSF81336">
    <property type="entry name" value="F1F0 ATP synthase subunit A"/>
    <property type="match status" value="1"/>
</dbReference>
<dbReference type="PROSITE" id="PS00449">
    <property type="entry name" value="ATPASE_A"/>
    <property type="match status" value="1"/>
</dbReference>
<proteinExistence type="inferred from homology"/>
<name>ATP61_BRUA4</name>
<sequence length="249" mass="26805">MANDPIHQFQVSRWIPIDVGGVDLSFTNVSAFMVATVVVASGFLYLTSSGRGLIPTRLQSVSEMAYEFVATSLRDSAGSKGMKFFPFVFSLFMFVLVANFLGLFPYFYTVTSQIIVTFALAVLVIGTVIVYGFFKHGLGFLKLFVPSGVPGIIVPLVVAIEIISFLSRPISLSVRLFANMLAGHITLKVFAGFVVSLAALGPIGIGGAVLPLIMTVAITALEFLVAFLQAYVFTVLTCMYINDAVHPGH</sequence>
<keyword id="KW-0066">ATP synthesis</keyword>
<keyword id="KW-0997">Cell inner membrane</keyword>
<keyword id="KW-1003">Cell membrane</keyword>
<keyword id="KW-0138">CF(0)</keyword>
<keyword id="KW-0375">Hydrogen ion transport</keyword>
<keyword id="KW-0406">Ion transport</keyword>
<keyword id="KW-0472">Membrane</keyword>
<keyword id="KW-1185">Reference proteome</keyword>
<keyword id="KW-0812">Transmembrane</keyword>
<keyword id="KW-1133">Transmembrane helix</keyword>
<keyword id="KW-0813">Transport</keyword>
<organism>
    <name type="scientific">Brucella anthropi (strain ATCC 49188 / DSM 6882 / CCUG 24695 / JCM 21032 / LMG 3331 / NBRC 15819 / NCTC 12168 / Alc 37)</name>
    <name type="common">Ochrobactrum anthropi</name>
    <dbReference type="NCBI Taxonomy" id="439375"/>
    <lineage>
        <taxon>Bacteria</taxon>
        <taxon>Pseudomonadati</taxon>
        <taxon>Pseudomonadota</taxon>
        <taxon>Alphaproteobacteria</taxon>
        <taxon>Hyphomicrobiales</taxon>
        <taxon>Brucellaceae</taxon>
        <taxon>Brucella/Ochrobactrum group</taxon>
        <taxon>Brucella</taxon>
    </lineage>
</organism>
<reference key="1">
    <citation type="journal article" date="2011" name="J. Bacteriol.">
        <title>Genome of Ochrobactrum anthropi ATCC 49188 T, a versatile opportunistic pathogen and symbiont of several eukaryotic hosts.</title>
        <authorList>
            <person name="Chain P.S."/>
            <person name="Lang D.M."/>
            <person name="Comerci D.J."/>
            <person name="Malfatti S.A."/>
            <person name="Vergez L.M."/>
            <person name="Shin M."/>
            <person name="Ugalde R.A."/>
            <person name="Garcia E."/>
            <person name="Tolmasky M.E."/>
        </authorList>
    </citation>
    <scope>NUCLEOTIDE SEQUENCE [LARGE SCALE GENOMIC DNA]</scope>
    <source>
        <strain>ATCC 49188 / DSM 6882 / CCUG 24695 / JCM 21032 / LMG 3331 / NBRC 15819 / NCTC 12168 / Alc 37</strain>
    </source>
</reference>
<gene>
    <name evidence="1" type="primary">atpB1</name>
    <name type="ordered locus">Oant_0500</name>
</gene>
<evidence type="ECO:0000255" key="1">
    <source>
        <dbReference type="HAMAP-Rule" id="MF_01393"/>
    </source>
</evidence>
<accession>A6WW77</accession>